<accession>P0A2T0</accession>
<accession>P27029</accession>
<comment type="function">
    <text evidence="1">Activates expression of the rhaBAD and rhaT operons.</text>
</comment>
<comment type="subunit">
    <text evidence="1">Binds DNA as a dimer.</text>
</comment>
<comment type="subcellular location">
    <subcellularLocation>
        <location evidence="1">Cytoplasm</location>
    </subcellularLocation>
</comment>
<proteinExistence type="inferred from homology"/>
<evidence type="ECO:0000255" key="1">
    <source>
        <dbReference type="HAMAP-Rule" id="MF_01534"/>
    </source>
</evidence>
<organism>
    <name type="scientific">Salmonella typhi</name>
    <dbReference type="NCBI Taxonomy" id="90370"/>
    <lineage>
        <taxon>Bacteria</taxon>
        <taxon>Pseudomonadati</taxon>
        <taxon>Pseudomonadota</taxon>
        <taxon>Gammaproteobacteria</taxon>
        <taxon>Enterobacterales</taxon>
        <taxon>Enterobacteriaceae</taxon>
        <taxon>Salmonella</taxon>
    </lineage>
</organism>
<sequence length="278" mass="32089">MTVLHSVDFFPSGKAPVAIEPRLPQAAFPEHHHDFHEIVIVEHGTGIHVFNGQPYTISGGTVCFVRDHDRHLYEHTDNLCLTNVLWRSPDAFQFLAGLDQLLPQEQDGYYPSHWRVNQSVLQQVRQLVGLMERAGDGMDAPAVANREILFMQLLVLLRRSSLMEGATNNDAKLNQLMAWLEDHFAEEVCWEAVAEQFSLSLRTLHRQLKQHTGLTPQRYLNRLRLIKARHLLRHSDHSVTEIAYRCGFGDSNHFSTLFRREFNWSPRDIRQGRDAIIQ</sequence>
<keyword id="KW-0010">Activator</keyword>
<keyword id="KW-0963">Cytoplasm</keyword>
<keyword id="KW-0238">DNA-binding</keyword>
<keyword id="KW-0677">Repeat</keyword>
<keyword id="KW-0684">Rhamnose metabolism</keyword>
<keyword id="KW-0804">Transcription</keyword>
<keyword id="KW-0805">Transcription regulation</keyword>
<feature type="chain" id="PRO_0000194570" description="HTH-type transcriptional activator RhaS">
    <location>
        <begin position="1"/>
        <end position="278"/>
    </location>
</feature>
<feature type="domain" description="HTH araC/xylS-type" evidence="1">
    <location>
        <begin position="174"/>
        <end position="272"/>
    </location>
</feature>
<feature type="DNA-binding region" description="H-T-H motif" evidence="1">
    <location>
        <begin position="191"/>
        <end position="212"/>
    </location>
</feature>
<feature type="DNA-binding region" description="H-T-H motif" evidence="1">
    <location>
        <begin position="239"/>
        <end position="262"/>
    </location>
</feature>
<feature type="site" description="Interaction with sigma-70" evidence="1">
    <location>
        <position position="241"/>
    </location>
</feature>
<feature type="site" description="Interaction with sigma-70" evidence="1">
    <location>
        <position position="250"/>
    </location>
</feature>
<reference key="1">
    <citation type="journal article" date="2001" name="Nature">
        <title>Complete genome sequence of a multiple drug resistant Salmonella enterica serovar Typhi CT18.</title>
        <authorList>
            <person name="Parkhill J."/>
            <person name="Dougan G."/>
            <person name="James K.D."/>
            <person name="Thomson N.R."/>
            <person name="Pickard D."/>
            <person name="Wain J."/>
            <person name="Churcher C.M."/>
            <person name="Mungall K.L."/>
            <person name="Bentley S.D."/>
            <person name="Holden M.T.G."/>
            <person name="Sebaihia M."/>
            <person name="Baker S."/>
            <person name="Basham D."/>
            <person name="Brooks K."/>
            <person name="Chillingworth T."/>
            <person name="Connerton P."/>
            <person name="Cronin A."/>
            <person name="Davis P."/>
            <person name="Davies R.M."/>
            <person name="Dowd L."/>
            <person name="White N."/>
            <person name="Farrar J."/>
            <person name="Feltwell T."/>
            <person name="Hamlin N."/>
            <person name="Haque A."/>
            <person name="Hien T.T."/>
            <person name="Holroyd S."/>
            <person name="Jagels K."/>
            <person name="Krogh A."/>
            <person name="Larsen T.S."/>
            <person name="Leather S."/>
            <person name="Moule S."/>
            <person name="O'Gaora P."/>
            <person name="Parry C."/>
            <person name="Quail M.A."/>
            <person name="Rutherford K.M."/>
            <person name="Simmonds M."/>
            <person name="Skelton J."/>
            <person name="Stevens K."/>
            <person name="Whitehead S."/>
            <person name="Barrell B.G."/>
        </authorList>
    </citation>
    <scope>NUCLEOTIDE SEQUENCE [LARGE SCALE GENOMIC DNA]</scope>
    <source>
        <strain>CT18</strain>
    </source>
</reference>
<reference key="2">
    <citation type="journal article" date="2003" name="J. Bacteriol.">
        <title>Comparative genomics of Salmonella enterica serovar Typhi strains Ty2 and CT18.</title>
        <authorList>
            <person name="Deng W."/>
            <person name="Liou S.-R."/>
            <person name="Plunkett G. III"/>
            <person name="Mayhew G.F."/>
            <person name="Rose D.J."/>
            <person name="Burland V."/>
            <person name="Kodoyianni V."/>
            <person name="Schwartz D.C."/>
            <person name="Blattner F.R."/>
        </authorList>
    </citation>
    <scope>NUCLEOTIDE SEQUENCE [LARGE SCALE GENOMIC DNA]</scope>
    <source>
        <strain>ATCC 700931 / Ty2</strain>
    </source>
</reference>
<gene>
    <name evidence="1" type="primary">rhaS</name>
    <name type="synonym">rhaC2</name>
    <name type="ordered locus">STY3825</name>
    <name type="ordered locus">t3571</name>
</gene>
<protein>
    <recommendedName>
        <fullName evidence="1">HTH-type transcriptional activator RhaS</fullName>
    </recommendedName>
    <alternativeName>
        <fullName evidence="1">L-rhamnose operon regulatory protein RhaS</fullName>
    </alternativeName>
</protein>
<name>RHAS_SALTI</name>
<dbReference type="EMBL" id="AL513382">
    <property type="protein sequence ID" value="CAD09576.1"/>
    <property type="molecule type" value="Genomic_DNA"/>
</dbReference>
<dbReference type="EMBL" id="AE014613">
    <property type="protein sequence ID" value="AAO71075.1"/>
    <property type="molecule type" value="Genomic_DNA"/>
</dbReference>
<dbReference type="RefSeq" id="NP_458002.1">
    <property type="nucleotide sequence ID" value="NC_003198.1"/>
</dbReference>
<dbReference type="RefSeq" id="WP_000217112.1">
    <property type="nucleotide sequence ID" value="NZ_WSUR01000010.1"/>
</dbReference>
<dbReference type="SMR" id="P0A2T0"/>
<dbReference type="STRING" id="220341.gene:17587687"/>
<dbReference type="KEGG" id="stt:t3571"/>
<dbReference type="KEGG" id="sty:STY3825"/>
<dbReference type="PATRIC" id="fig|220341.7.peg.3905"/>
<dbReference type="eggNOG" id="COG4977">
    <property type="taxonomic scope" value="Bacteria"/>
</dbReference>
<dbReference type="HOGENOM" id="CLU_000445_88_5_6"/>
<dbReference type="OMA" id="GHYPSHW"/>
<dbReference type="OrthoDB" id="2547276at2"/>
<dbReference type="Proteomes" id="UP000000541">
    <property type="component" value="Chromosome"/>
</dbReference>
<dbReference type="Proteomes" id="UP000002670">
    <property type="component" value="Chromosome"/>
</dbReference>
<dbReference type="GO" id="GO:0005737">
    <property type="term" value="C:cytoplasm"/>
    <property type="evidence" value="ECO:0007669"/>
    <property type="project" value="UniProtKB-SubCell"/>
</dbReference>
<dbReference type="GO" id="GO:0003700">
    <property type="term" value="F:DNA-binding transcription factor activity"/>
    <property type="evidence" value="ECO:0007669"/>
    <property type="project" value="UniProtKB-UniRule"/>
</dbReference>
<dbReference type="GO" id="GO:0043565">
    <property type="term" value="F:sequence-specific DNA binding"/>
    <property type="evidence" value="ECO:0007669"/>
    <property type="project" value="InterPro"/>
</dbReference>
<dbReference type="GO" id="GO:0045893">
    <property type="term" value="P:positive regulation of DNA-templated transcription"/>
    <property type="evidence" value="ECO:0007669"/>
    <property type="project" value="UniProtKB-UniRule"/>
</dbReference>
<dbReference type="GO" id="GO:0019299">
    <property type="term" value="P:rhamnose metabolic process"/>
    <property type="evidence" value="ECO:0007669"/>
    <property type="project" value="UniProtKB-UniRule"/>
</dbReference>
<dbReference type="CDD" id="cd06977">
    <property type="entry name" value="cupin_RhaR_RhaS-like_N"/>
    <property type="match status" value="1"/>
</dbReference>
<dbReference type="Gene3D" id="1.10.10.60">
    <property type="entry name" value="Homeodomain-like"/>
    <property type="match status" value="1"/>
</dbReference>
<dbReference type="Gene3D" id="2.60.120.10">
    <property type="entry name" value="Jelly Rolls"/>
    <property type="match status" value="1"/>
</dbReference>
<dbReference type="HAMAP" id="MF_01534">
    <property type="entry name" value="HTH_type_RhaS"/>
    <property type="match status" value="1"/>
</dbReference>
<dbReference type="InterPro" id="IPR003313">
    <property type="entry name" value="AraC-bd"/>
</dbReference>
<dbReference type="InterPro" id="IPR050204">
    <property type="entry name" value="AraC_XylS_family_regulators"/>
</dbReference>
<dbReference type="InterPro" id="IPR009057">
    <property type="entry name" value="Homeodomain-like_sf"/>
</dbReference>
<dbReference type="InterPro" id="IPR037923">
    <property type="entry name" value="HTH-like"/>
</dbReference>
<dbReference type="InterPro" id="IPR018060">
    <property type="entry name" value="HTH_AraC"/>
</dbReference>
<dbReference type="InterPro" id="IPR018062">
    <property type="entry name" value="HTH_AraC-typ_CS"/>
</dbReference>
<dbReference type="InterPro" id="IPR047220">
    <property type="entry name" value="RhaR_RhaS-like_N"/>
</dbReference>
<dbReference type="InterPro" id="IPR014710">
    <property type="entry name" value="RmlC-like_jellyroll"/>
</dbReference>
<dbReference type="InterPro" id="IPR020449">
    <property type="entry name" value="Tscrpt_reg_AraC-type_HTH"/>
</dbReference>
<dbReference type="InterPro" id="IPR023609">
    <property type="entry name" value="Tscrpt_reg_HTH_RhaS"/>
</dbReference>
<dbReference type="NCBIfam" id="NF010028">
    <property type="entry name" value="PRK13503.1"/>
    <property type="match status" value="1"/>
</dbReference>
<dbReference type="PANTHER" id="PTHR46796:SF13">
    <property type="entry name" value="HTH-TYPE TRANSCRIPTIONAL ACTIVATOR RHAS"/>
    <property type="match status" value="1"/>
</dbReference>
<dbReference type="PANTHER" id="PTHR46796">
    <property type="entry name" value="HTH-TYPE TRANSCRIPTIONAL ACTIVATOR RHAS-RELATED"/>
    <property type="match status" value="1"/>
</dbReference>
<dbReference type="Pfam" id="PF02311">
    <property type="entry name" value="AraC_binding"/>
    <property type="match status" value="1"/>
</dbReference>
<dbReference type="Pfam" id="PF12833">
    <property type="entry name" value="HTH_18"/>
    <property type="match status" value="1"/>
</dbReference>
<dbReference type="PRINTS" id="PR00032">
    <property type="entry name" value="HTHARAC"/>
</dbReference>
<dbReference type="SMART" id="SM00342">
    <property type="entry name" value="HTH_ARAC"/>
    <property type="match status" value="1"/>
</dbReference>
<dbReference type="SUPFAM" id="SSF46689">
    <property type="entry name" value="Homeodomain-like"/>
    <property type="match status" value="2"/>
</dbReference>
<dbReference type="SUPFAM" id="SSF51215">
    <property type="entry name" value="Regulatory protein AraC"/>
    <property type="match status" value="1"/>
</dbReference>
<dbReference type="PROSITE" id="PS00041">
    <property type="entry name" value="HTH_ARAC_FAMILY_1"/>
    <property type="match status" value="1"/>
</dbReference>
<dbReference type="PROSITE" id="PS01124">
    <property type="entry name" value="HTH_ARAC_FAMILY_2"/>
    <property type="match status" value="1"/>
</dbReference>